<organism>
    <name type="scientific">Syntrophomonas wolfei subsp. wolfei (strain DSM 2245B / Goettingen)</name>
    <dbReference type="NCBI Taxonomy" id="335541"/>
    <lineage>
        <taxon>Bacteria</taxon>
        <taxon>Bacillati</taxon>
        <taxon>Bacillota</taxon>
        <taxon>Clostridia</taxon>
        <taxon>Eubacteriales</taxon>
        <taxon>Syntrophomonadaceae</taxon>
        <taxon>Syntrophomonas</taxon>
    </lineage>
</organism>
<comment type="similarity">
    <text evidence="1">Belongs to the CinA family.</text>
</comment>
<comment type="sequence caution" evidence="2">
    <conflict type="erroneous initiation">
        <sequence resource="EMBL-CDS" id="ABI68566"/>
    </conflict>
</comment>
<protein>
    <recommendedName>
        <fullName evidence="1">CinA-like protein</fullName>
    </recommendedName>
</protein>
<proteinExistence type="inferred from homology"/>
<accession>Q0AXI8</accession>
<feature type="chain" id="PRO_0000336535" description="CinA-like protein">
    <location>
        <begin position="1"/>
        <end position="416"/>
    </location>
</feature>
<evidence type="ECO:0000255" key="1">
    <source>
        <dbReference type="HAMAP-Rule" id="MF_00226"/>
    </source>
</evidence>
<evidence type="ECO:0000305" key="2"/>
<reference key="1">
    <citation type="journal article" date="2010" name="Environ. Microbiol.">
        <title>The genome of Syntrophomonas wolfei: new insights into syntrophic metabolism and biohydrogen production.</title>
        <authorList>
            <person name="Sieber J.R."/>
            <person name="Sims D.R."/>
            <person name="Han C."/>
            <person name="Kim E."/>
            <person name="Lykidis A."/>
            <person name="Lapidus A.L."/>
            <person name="McDonnald E."/>
            <person name="Rohlin L."/>
            <person name="Culley D.E."/>
            <person name="Gunsalus R."/>
            <person name="McInerney M.J."/>
        </authorList>
    </citation>
    <scope>NUCLEOTIDE SEQUENCE [LARGE SCALE GENOMIC DNA]</scope>
    <source>
        <strain>DSM 2245B / Goettingen</strain>
    </source>
</reference>
<name>CINAL_SYNWW</name>
<dbReference type="EMBL" id="CP000448">
    <property type="protein sequence ID" value="ABI68566.1"/>
    <property type="status" value="ALT_INIT"/>
    <property type="molecule type" value="Genomic_DNA"/>
</dbReference>
<dbReference type="RefSeq" id="WP_041427441.1">
    <property type="nucleotide sequence ID" value="NC_008346.1"/>
</dbReference>
<dbReference type="SMR" id="Q0AXI8"/>
<dbReference type="STRING" id="335541.Swol_1257"/>
<dbReference type="KEGG" id="swo:Swol_1257"/>
<dbReference type="eggNOG" id="COG1058">
    <property type="taxonomic scope" value="Bacteria"/>
</dbReference>
<dbReference type="eggNOG" id="COG1546">
    <property type="taxonomic scope" value="Bacteria"/>
</dbReference>
<dbReference type="HOGENOM" id="CLU_030805_9_3_9"/>
<dbReference type="OrthoDB" id="9801454at2"/>
<dbReference type="Proteomes" id="UP000001968">
    <property type="component" value="Chromosome"/>
</dbReference>
<dbReference type="CDD" id="cd00885">
    <property type="entry name" value="cinA"/>
    <property type="match status" value="1"/>
</dbReference>
<dbReference type="Gene3D" id="3.30.70.2860">
    <property type="match status" value="1"/>
</dbReference>
<dbReference type="Gene3D" id="3.90.950.20">
    <property type="entry name" value="CinA-like"/>
    <property type="match status" value="1"/>
</dbReference>
<dbReference type="Gene3D" id="3.40.980.10">
    <property type="entry name" value="MoaB/Mog-like domain"/>
    <property type="match status" value="1"/>
</dbReference>
<dbReference type="HAMAP" id="MF_00226_B">
    <property type="entry name" value="CinA_B"/>
    <property type="match status" value="1"/>
</dbReference>
<dbReference type="InterPro" id="IPR050101">
    <property type="entry name" value="CinA"/>
</dbReference>
<dbReference type="InterPro" id="IPR036653">
    <property type="entry name" value="CinA-like_C"/>
</dbReference>
<dbReference type="InterPro" id="IPR008136">
    <property type="entry name" value="CinA_C"/>
</dbReference>
<dbReference type="InterPro" id="IPR041424">
    <property type="entry name" value="CinA_KH"/>
</dbReference>
<dbReference type="InterPro" id="IPR008135">
    <property type="entry name" value="Competence-induced_CinA"/>
</dbReference>
<dbReference type="InterPro" id="IPR036425">
    <property type="entry name" value="MoaB/Mog-like_dom_sf"/>
</dbReference>
<dbReference type="InterPro" id="IPR001453">
    <property type="entry name" value="MoaB/Mog_dom"/>
</dbReference>
<dbReference type="NCBIfam" id="TIGR00200">
    <property type="entry name" value="cinA_nterm"/>
    <property type="match status" value="1"/>
</dbReference>
<dbReference type="NCBIfam" id="TIGR00199">
    <property type="entry name" value="PncC_domain"/>
    <property type="match status" value="1"/>
</dbReference>
<dbReference type="NCBIfam" id="NF001813">
    <property type="entry name" value="PRK00549.1"/>
    <property type="match status" value="1"/>
</dbReference>
<dbReference type="PANTHER" id="PTHR13939">
    <property type="entry name" value="NICOTINAMIDE-NUCLEOTIDE AMIDOHYDROLASE PNCC"/>
    <property type="match status" value="1"/>
</dbReference>
<dbReference type="PANTHER" id="PTHR13939:SF0">
    <property type="entry name" value="NMN AMIDOHYDROLASE-LIKE PROTEIN YFAY"/>
    <property type="match status" value="1"/>
</dbReference>
<dbReference type="Pfam" id="PF02464">
    <property type="entry name" value="CinA"/>
    <property type="match status" value="1"/>
</dbReference>
<dbReference type="Pfam" id="PF18146">
    <property type="entry name" value="CinA_KH"/>
    <property type="match status" value="1"/>
</dbReference>
<dbReference type="Pfam" id="PF00994">
    <property type="entry name" value="MoCF_biosynth"/>
    <property type="match status" value="1"/>
</dbReference>
<dbReference type="PIRSF" id="PIRSF006728">
    <property type="entry name" value="CinA"/>
    <property type="match status" value="1"/>
</dbReference>
<dbReference type="SMART" id="SM00852">
    <property type="entry name" value="MoCF_biosynth"/>
    <property type="match status" value="1"/>
</dbReference>
<dbReference type="SUPFAM" id="SSF142433">
    <property type="entry name" value="CinA-like"/>
    <property type="match status" value="1"/>
</dbReference>
<dbReference type="SUPFAM" id="SSF53218">
    <property type="entry name" value="Molybdenum cofactor biosynthesis proteins"/>
    <property type="match status" value="1"/>
</dbReference>
<sequence>MKTACLISTGTELLLGTTNDSNSVFLATRLLERGIKVIGKTVVGDSRETIKMAFASSLGLADMVISSGGLGPTRDDLTKEVACQVMGCEMVINQAEVKRLEDFFARRQRPMPESNLKQALFPAEAEIIFNPLGTAPGMYLKKDNKVLILLPGPPREMEYMFKNEIETRLERDFPQALNRVTRKTIKILGPGESQLEKILDGVIDDSPELSMALLAVDGEIHIKLTADGQDINHSKELMEKACQSIKEALGRNIVGYDNDTLLSVVAACLANTGKKIAVAESCTGGLLAKMITDLSGSSEYFWGSVTSYSNEAKMLYLNVKRETLEQYGAVSPEVAREMAQGMQKQSGTDLALSITGIAGPDGGTKDKPVGLVYICLADGGFLQVKEMHFVGNRESIRILAAKTALDLLRRHLKNGG</sequence>
<keyword id="KW-1185">Reference proteome</keyword>
<gene>
    <name type="ordered locus">Swol_1257</name>
</gene>